<proteinExistence type="inferred from homology"/>
<dbReference type="EMBL" id="AE016877">
    <property type="protein sequence ID" value="AAP07170.1"/>
    <property type="molecule type" value="Genomic_DNA"/>
</dbReference>
<dbReference type="RefSeq" id="NP_829969.1">
    <property type="nucleotide sequence ID" value="NC_004722.1"/>
</dbReference>
<dbReference type="RefSeq" id="WP_000656372.1">
    <property type="nucleotide sequence ID" value="NZ_CP138336.1"/>
</dbReference>
<dbReference type="SMR" id="Q81J80"/>
<dbReference type="STRING" id="226900.BC_0074"/>
<dbReference type="KEGG" id="bce:BC0074"/>
<dbReference type="PATRIC" id="fig|226900.8.peg.89"/>
<dbReference type="HOGENOM" id="CLU_054493_1_0_9"/>
<dbReference type="OrthoDB" id="9776534at2"/>
<dbReference type="Proteomes" id="UP000001417">
    <property type="component" value="Chromosome"/>
</dbReference>
<dbReference type="GO" id="GO:0005737">
    <property type="term" value="C:cytoplasm"/>
    <property type="evidence" value="ECO:0000318"/>
    <property type="project" value="GO_Central"/>
</dbReference>
<dbReference type="GO" id="GO:0044183">
    <property type="term" value="F:protein folding chaperone"/>
    <property type="evidence" value="ECO:0000318"/>
    <property type="project" value="GO_Central"/>
</dbReference>
<dbReference type="GO" id="GO:0051082">
    <property type="term" value="F:unfolded protein binding"/>
    <property type="evidence" value="ECO:0007669"/>
    <property type="project" value="UniProtKB-UniRule"/>
</dbReference>
<dbReference type="GO" id="GO:0042026">
    <property type="term" value="P:protein refolding"/>
    <property type="evidence" value="ECO:0000318"/>
    <property type="project" value="GO_Central"/>
</dbReference>
<dbReference type="CDD" id="cd00498">
    <property type="entry name" value="Hsp33"/>
    <property type="match status" value="1"/>
</dbReference>
<dbReference type="Gene3D" id="3.55.30.10">
    <property type="entry name" value="Hsp33 domain"/>
    <property type="match status" value="1"/>
</dbReference>
<dbReference type="Gene3D" id="3.90.1280.10">
    <property type="entry name" value="HSP33 redox switch-like"/>
    <property type="match status" value="1"/>
</dbReference>
<dbReference type="HAMAP" id="MF_00117">
    <property type="entry name" value="HslO"/>
    <property type="match status" value="1"/>
</dbReference>
<dbReference type="InterPro" id="IPR000397">
    <property type="entry name" value="Heat_shock_Hsp33"/>
</dbReference>
<dbReference type="InterPro" id="IPR016154">
    <property type="entry name" value="Heat_shock_Hsp33_C"/>
</dbReference>
<dbReference type="InterPro" id="IPR016153">
    <property type="entry name" value="Heat_shock_Hsp33_N"/>
</dbReference>
<dbReference type="NCBIfam" id="NF001033">
    <property type="entry name" value="PRK00114.1"/>
    <property type="match status" value="1"/>
</dbReference>
<dbReference type="PANTHER" id="PTHR30111">
    <property type="entry name" value="33 KDA CHAPERONIN"/>
    <property type="match status" value="1"/>
</dbReference>
<dbReference type="PANTHER" id="PTHR30111:SF1">
    <property type="entry name" value="33 KDA CHAPERONIN"/>
    <property type="match status" value="1"/>
</dbReference>
<dbReference type="Pfam" id="PF01430">
    <property type="entry name" value="HSP33"/>
    <property type="match status" value="1"/>
</dbReference>
<dbReference type="PIRSF" id="PIRSF005261">
    <property type="entry name" value="Heat_shock_Hsp33"/>
    <property type="match status" value="1"/>
</dbReference>
<dbReference type="SUPFAM" id="SSF64397">
    <property type="entry name" value="Hsp33 domain"/>
    <property type="match status" value="1"/>
</dbReference>
<dbReference type="SUPFAM" id="SSF118352">
    <property type="entry name" value="HSP33 redox switch-like"/>
    <property type="match status" value="1"/>
</dbReference>
<comment type="function">
    <text evidence="1">Redox regulated molecular chaperone. Protects both thermally unfolding and oxidatively damaged proteins from irreversible aggregation. Plays an important role in the bacterial defense system toward oxidative stress.</text>
</comment>
<comment type="subcellular location">
    <subcellularLocation>
        <location evidence="1">Cytoplasm</location>
    </subcellularLocation>
</comment>
<comment type="PTM">
    <text evidence="1">Under oxidizing conditions two disulfide bonds are formed involving the reactive cysteines. Under reducing conditions zinc is bound to the reactive cysteines and the protein is inactive.</text>
</comment>
<comment type="similarity">
    <text evidence="1">Belongs to the HSP33 family.</text>
</comment>
<reference key="1">
    <citation type="journal article" date="2003" name="Nature">
        <title>Genome sequence of Bacillus cereus and comparative analysis with Bacillus anthracis.</title>
        <authorList>
            <person name="Ivanova N."/>
            <person name="Sorokin A."/>
            <person name="Anderson I."/>
            <person name="Galleron N."/>
            <person name="Candelon B."/>
            <person name="Kapatral V."/>
            <person name="Bhattacharyya A."/>
            <person name="Reznik G."/>
            <person name="Mikhailova N."/>
            <person name="Lapidus A."/>
            <person name="Chu L."/>
            <person name="Mazur M."/>
            <person name="Goltsman E."/>
            <person name="Larsen N."/>
            <person name="D'Souza M."/>
            <person name="Walunas T."/>
            <person name="Grechkin Y."/>
            <person name="Pusch G."/>
            <person name="Haselkorn R."/>
            <person name="Fonstein M."/>
            <person name="Ehrlich S.D."/>
            <person name="Overbeek R."/>
            <person name="Kyrpides N.C."/>
        </authorList>
    </citation>
    <scope>NUCLEOTIDE SEQUENCE [LARGE SCALE GENOMIC DNA]</scope>
    <source>
        <strain>ATCC 14579 / DSM 31 / CCUG 7414 / JCM 2152 / NBRC 15305 / NCIMB 9373 / NCTC 2599 / NRRL B-3711</strain>
    </source>
</reference>
<organism>
    <name type="scientific">Bacillus cereus (strain ATCC 14579 / DSM 31 / CCUG 7414 / JCM 2152 / NBRC 15305 / NCIMB 9373 / NCTC 2599 / NRRL B-3711)</name>
    <dbReference type="NCBI Taxonomy" id="226900"/>
    <lineage>
        <taxon>Bacteria</taxon>
        <taxon>Bacillati</taxon>
        <taxon>Bacillota</taxon>
        <taxon>Bacilli</taxon>
        <taxon>Bacillales</taxon>
        <taxon>Bacillaceae</taxon>
        <taxon>Bacillus</taxon>
        <taxon>Bacillus cereus group</taxon>
    </lineage>
</organism>
<feature type="chain" id="PRO_0000192164" description="33 kDa chaperonin">
    <location>
        <begin position="1"/>
        <end position="291"/>
    </location>
</feature>
<feature type="disulfide bond" description="Redox-active" evidence="1">
    <location>
        <begin position="237"/>
        <end position="239"/>
    </location>
</feature>
<feature type="disulfide bond" description="Redox-active" evidence="1">
    <location>
        <begin position="270"/>
        <end position="273"/>
    </location>
</feature>
<evidence type="ECO:0000255" key="1">
    <source>
        <dbReference type="HAMAP-Rule" id="MF_00117"/>
    </source>
</evidence>
<protein>
    <recommendedName>
        <fullName evidence="1">33 kDa chaperonin</fullName>
    </recommendedName>
    <alternativeName>
        <fullName evidence="1">Heat shock protein 33 homolog</fullName>
        <shortName evidence="1">HSP33</shortName>
    </alternativeName>
</protein>
<gene>
    <name evidence="1" type="primary">hslO</name>
    <name type="ordered locus">BC_0074</name>
</gene>
<keyword id="KW-0143">Chaperone</keyword>
<keyword id="KW-0963">Cytoplasm</keyword>
<keyword id="KW-1015">Disulfide bond</keyword>
<keyword id="KW-0676">Redox-active center</keyword>
<keyword id="KW-1185">Reference proteome</keyword>
<keyword id="KW-0862">Zinc</keyword>
<sequence length="291" mass="32044">MKDYLVKALAFDGEVRAYSVRTTNTVSEAQRRHDTWRTASAALGRSLTAGTMMGAMLKGEQKLTIKVEGNGPIGPILVDAHANGDVRGYVTNPHVDFEGTEQGKLRVYQAVGTEGFVTVIKDIGMREPFIGQSPIVSGELGEDFTYYFAVSEQTPSSVGVGVLVNGDDSILAAGGFILQIMPGAQDETISFIEDRLQKIPPVSTLIEQGLSPEELLYAVLGEDKVKVLETMDVQFNCTCSRERIESVLISLGKTELEQVREEEEETEVHCHFCNERYKFSKEDITNLIENL</sequence>
<accession>Q81J80</accession>
<name>HSLO_BACCR</name>